<reference key="1">
    <citation type="journal article" date="2002" name="Nature">
        <title>The genome sequence of Schizosaccharomyces pombe.</title>
        <authorList>
            <person name="Wood V."/>
            <person name="Gwilliam R."/>
            <person name="Rajandream M.A."/>
            <person name="Lyne M.H."/>
            <person name="Lyne R."/>
            <person name="Stewart A."/>
            <person name="Sgouros J.G."/>
            <person name="Peat N."/>
            <person name="Hayles J."/>
            <person name="Baker S.G."/>
            <person name="Basham D."/>
            <person name="Bowman S."/>
            <person name="Brooks K."/>
            <person name="Brown D."/>
            <person name="Brown S."/>
            <person name="Chillingworth T."/>
            <person name="Churcher C.M."/>
            <person name="Collins M."/>
            <person name="Connor R."/>
            <person name="Cronin A."/>
            <person name="Davis P."/>
            <person name="Feltwell T."/>
            <person name="Fraser A."/>
            <person name="Gentles S."/>
            <person name="Goble A."/>
            <person name="Hamlin N."/>
            <person name="Harris D.E."/>
            <person name="Hidalgo J."/>
            <person name="Hodgson G."/>
            <person name="Holroyd S."/>
            <person name="Hornsby T."/>
            <person name="Howarth S."/>
            <person name="Huckle E.J."/>
            <person name="Hunt S."/>
            <person name="Jagels K."/>
            <person name="James K.D."/>
            <person name="Jones L."/>
            <person name="Jones M."/>
            <person name="Leather S."/>
            <person name="McDonald S."/>
            <person name="McLean J."/>
            <person name="Mooney P."/>
            <person name="Moule S."/>
            <person name="Mungall K.L."/>
            <person name="Murphy L.D."/>
            <person name="Niblett D."/>
            <person name="Odell C."/>
            <person name="Oliver K."/>
            <person name="O'Neil S."/>
            <person name="Pearson D."/>
            <person name="Quail M.A."/>
            <person name="Rabbinowitsch E."/>
            <person name="Rutherford K.M."/>
            <person name="Rutter S."/>
            <person name="Saunders D."/>
            <person name="Seeger K."/>
            <person name="Sharp S."/>
            <person name="Skelton J."/>
            <person name="Simmonds M.N."/>
            <person name="Squares R."/>
            <person name="Squares S."/>
            <person name="Stevens K."/>
            <person name="Taylor K."/>
            <person name="Taylor R.G."/>
            <person name="Tivey A."/>
            <person name="Walsh S.V."/>
            <person name="Warren T."/>
            <person name="Whitehead S."/>
            <person name="Woodward J.R."/>
            <person name="Volckaert G."/>
            <person name="Aert R."/>
            <person name="Robben J."/>
            <person name="Grymonprez B."/>
            <person name="Weltjens I."/>
            <person name="Vanstreels E."/>
            <person name="Rieger M."/>
            <person name="Schaefer M."/>
            <person name="Mueller-Auer S."/>
            <person name="Gabel C."/>
            <person name="Fuchs M."/>
            <person name="Duesterhoeft A."/>
            <person name="Fritzc C."/>
            <person name="Holzer E."/>
            <person name="Moestl D."/>
            <person name="Hilbert H."/>
            <person name="Borzym K."/>
            <person name="Langer I."/>
            <person name="Beck A."/>
            <person name="Lehrach H."/>
            <person name="Reinhardt R."/>
            <person name="Pohl T.M."/>
            <person name="Eger P."/>
            <person name="Zimmermann W."/>
            <person name="Wedler H."/>
            <person name="Wambutt R."/>
            <person name="Purnelle B."/>
            <person name="Goffeau A."/>
            <person name="Cadieu E."/>
            <person name="Dreano S."/>
            <person name="Gloux S."/>
            <person name="Lelaure V."/>
            <person name="Mottier S."/>
            <person name="Galibert F."/>
            <person name="Aves S.J."/>
            <person name="Xiang Z."/>
            <person name="Hunt C."/>
            <person name="Moore K."/>
            <person name="Hurst S.M."/>
            <person name="Lucas M."/>
            <person name="Rochet M."/>
            <person name="Gaillardin C."/>
            <person name="Tallada V.A."/>
            <person name="Garzon A."/>
            <person name="Thode G."/>
            <person name="Daga R.R."/>
            <person name="Cruzado L."/>
            <person name="Jimenez J."/>
            <person name="Sanchez M."/>
            <person name="del Rey F."/>
            <person name="Benito J."/>
            <person name="Dominguez A."/>
            <person name="Revuelta J.L."/>
            <person name="Moreno S."/>
            <person name="Armstrong J."/>
            <person name="Forsburg S.L."/>
            <person name="Cerutti L."/>
            <person name="Lowe T."/>
            <person name="McCombie W.R."/>
            <person name="Paulsen I."/>
            <person name="Potashkin J."/>
            <person name="Shpakovski G.V."/>
            <person name="Ussery D."/>
            <person name="Barrell B.G."/>
            <person name="Nurse P."/>
        </authorList>
    </citation>
    <scope>NUCLEOTIDE SEQUENCE [LARGE SCALE GENOMIC DNA]</scope>
    <source>
        <strain>972 / ATCC 24843</strain>
    </source>
</reference>
<proteinExistence type="predicted"/>
<sequence length="94" mass="11248">MSDSFHYQYDRASPERLKPTIYSWTRLRQSTRAQNENEQAKRRQGILEHKRGGSMEMNKFIDESAYMEWEKQLENASEDYAIEPSDLEEEVDQL</sequence>
<gene>
    <name type="ORF">SPAC17C9.15c</name>
</gene>
<protein>
    <recommendedName>
        <fullName>Uncharacterized protein C17C9.15c</fullName>
    </recommendedName>
</protein>
<organism>
    <name type="scientific">Schizosaccharomyces pombe (strain 972 / ATCC 24843)</name>
    <name type="common">Fission yeast</name>
    <dbReference type="NCBI Taxonomy" id="284812"/>
    <lineage>
        <taxon>Eukaryota</taxon>
        <taxon>Fungi</taxon>
        <taxon>Dikarya</taxon>
        <taxon>Ascomycota</taxon>
        <taxon>Taphrinomycotina</taxon>
        <taxon>Schizosaccharomycetes</taxon>
        <taxon>Schizosaccharomycetales</taxon>
        <taxon>Schizosaccharomycetaceae</taxon>
        <taxon>Schizosaccharomyces</taxon>
    </lineage>
</organism>
<keyword id="KW-1185">Reference proteome</keyword>
<dbReference type="EMBL" id="CU329670">
    <property type="protein sequence ID" value="CAA97345.1"/>
    <property type="molecule type" value="Genomic_DNA"/>
</dbReference>
<dbReference type="PIR" id="T11595">
    <property type="entry name" value="T11595"/>
</dbReference>
<dbReference type="SMR" id="Q10486"/>
<dbReference type="BioGRID" id="278677">
    <property type="interactions" value="2"/>
</dbReference>
<dbReference type="iPTMnet" id="Q10486"/>
<dbReference type="PaxDb" id="4896-SPAC17C9.15c.1"/>
<dbReference type="EnsemblFungi" id="SPAC17C9.15c.1">
    <property type="protein sequence ID" value="SPAC17C9.15c.1:pep"/>
    <property type="gene ID" value="SPAC17C9.15c"/>
</dbReference>
<dbReference type="KEGG" id="spo:2542202"/>
<dbReference type="PomBase" id="SPAC17C9.15c"/>
<dbReference type="VEuPathDB" id="FungiDB:SPAC17C9.15c"/>
<dbReference type="HOGENOM" id="CLU_2387437_0_0_1"/>
<dbReference type="InParanoid" id="Q10486"/>
<dbReference type="OMA" id="IDESAYM"/>
<dbReference type="PRO" id="PR:Q10486"/>
<dbReference type="Proteomes" id="UP000002485">
    <property type="component" value="Chromosome I"/>
</dbReference>
<dbReference type="GO" id="GO:0005829">
    <property type="term" value="C:cytosol"/>
    <property type="evidence" value="ECO:0007005"/>
    <property type="project" value="PomBase"/>
</dbReference>
<dbReference type="GO" id="GO:0005634">
    <property type="term" value="C:nucleus"/>
    <property type="evidence" value="ECO:0007005"/>
    <property type="project" value="PomBase"/>
</dbReference>
<feature type="chain" id="PRO_0000116619" description="Uncharacterized protein C17C9.15c">
    <location>
        <begin position="1"/>
        <end position="94"/>
    </location>
</feature>
<accession>Q10486</accession>
<name>YDFF_SCHPO</name>